<accession>Q9Y376</accession>
<accession>A8K8L7</accession>
<name>CAB39_HUMAN</name>
<dbReference type="EMBL" id="AF151824">
    <property type="protein sequence ID" value="AAD34061.1"/>
    <property type="molecule type" value="mRNA"/>
</dbReference>
<dbReference type="EMBL" id="AF113536">
    <property type="protein sequence ID" value="AAF14873.1"/>
    <property type="molecule type" value="mRNA"/>
</dbReference>
<dbReference type="EMBL" id="AK292382">
    <property type="protein sequence ID" value="BAF85071.1"/>
    <property type="molecule type" value="mRNA"/>
</dbReference>
<dbReference type="EMBL" id="AK315692">
    <property type="protein sequence ID" value="BAG38055.1"/>
    <property type="molecule type" value="mRNA"/>
</dbReference>
<dbReference type="EMBL" id="CH471063">
    <property type="protein sequence ID" value="EAW70932.1"/>
    <property type="molecule type" value="Genomic_DNA"/>
</dbReference>
<dbReference type="EMBL" id="BC020570">
    <property type="protein sequence ID" value="AAH20570.1"/>
    <property type="molecule type" value="mRNA"/>
</dbReference>
<dbReference type="CCDS" id="CCDS2478.1"/>
<dbReference type="RefSeq" id="NP_001124321.1">
    <property type="nucleotide sequence ID" value="NM_001130849.2"/>
</dbReference>
<dbReference type="RefSeq" id="NP_001124322.1">
    <property type="nucleotide sequence ID" value="NM_001130850.2"/>
</dbReference>
<dbReference type="RefSeq" id="NP_057373.1">
    <property type="nucleotide sequence ID" value="NM_016289.4"/>
</dbReference>
<dbReference type="PDB" id="1UPK">
    <property type="method" value="X-ray"/>
    <property type="resolution" value="1.85 A"/>
    <property type="chains" value="A=1-341"/>
</dbReference>
<dbReference type="PDB" id="1UPL">
    <property type="method" value="X-ray"/>
    <property type="resolution" value="2.60 A"/>
    <property type="chains" value="A/B=1-341"/>
</dbReference>
<dbReference type="PDB" id="2WTK">
    <property type="method" value="X-ray"/>
    <property type="resolution" value="2.65 A"/>
    <property type="chains" value="A/D=1-341"/>
</dbReference>
<dbReference type="PDB" id="3GNI">
    <property type="method" value="X-ray"/>
    <property type="resolution" value="2.35 A"/>
    <property type="chains" value="A=1-341"/>
</dbReference>
<dbReference type="PDB" id="4FZA">
    <property type="method" value="X-ray"/>
    <property type="resolution" value="3.15 A"/>
    <property type="chains" value="A=11-334"/>
</dbReference>
<dbReference type="PDB" id="4FZD">
    <property type="method" value="X-ray"/>
    <property type="resolution" value="3.25 A"/>
    <property type="chains" value="A=11-334"/>
</dbReference>
<dbReference type="PDB" id="4FZF">
    <property type="method" value="X-ray"/>
    <property type="resolution" value="3.64 A"/>
    <property type="chains" value="A=11-334"/>
</dbReference>
<dbReference type="PDB" id="4NZW">
    <property type="method" value="X-ray"/>
    <property type="resolution" value="3.58 A"/>
    <property type="chains" value="A=8-334"/>
</dbReference>
<dbReference type="PDB" id="4O27">
    <property type="method" value="X-ray"/>
    <property type="resolution" value="3.18 A"/>
    <property type="chains" value="A=11-333"/>
</dbReference>
<dbReference type="PDB" id="8VSU">
    <property type="method" value="EM"/>
    <property type="resolution" value="2.86 A"/>
    <property type="chains" value="A=1-341"/>
</dbReference>
<dbReference type="PDBsum" id="1UPK"/>
<dbReference type="PDBsum" id="1UPL"/>
<dbReference type="PDBsum" id="2WTK"/>
<dbReference type="PDBsum" id="3GNI"/>
<dbReference type="PDBsum" id="4FZA"/>
<dbReference type="PDBsum" id="4FZD"/>
<dbReference type="PDBsum" id="4FZF"/>
<dbReference type="PDBsum" id="4NZW"/>
<dbReference type="PDBsum" id="4O27"/>
<dbReference type="PDBsum" id="8VSU"/>
<dbReference type="EMDB" id="EMD-43506"/>
<dbReference type="SMR" id="Q9Y376"/>
<dbReference type="BioGRID" id="119696">
    <property type="interactions" value="96"/>
</dbReference>
<dbReference type="ComplexPortal" id="CPX-2845">
    <property type="entry name" value="LKB1-STRAD-MO25 serine/threonine protein kinase complex, CAB39-STRADA variant"/>
</dbReference>
<dbReference type="ComplexPortal" id="CPX-2868">
    <property type="entry name" value="LKB1-STRAD-MO25 serine/threonine protein kinase complex, CAB39-STRADB variant"/>
</dbReference>
<dbReference type="CORUM" id="Q9Y376"/>
<dbReference type="DIP" id="DIP-31316N"/>
<dbReference type="FunCoup" id="Q9Y376">
    <property type="interactions" value="2788"/>
</dbReference>
<dbReference type="IntAct" id="Q9Y376">
    <property type="interactions" value="41"/>
</dbReference>
<dbReference type="MINT" id="Q9Y376"/>
<dbReference type="STRING" id="9606.ENSP00000258418"/>
<dbReference type="ChEMBL" id="CHEMBL3885534"/>
<dbReference type="GlyGen" id="Q9Y376">
    <property type="glycosylation" value="1 site, 1 O-linked glycan (1 site)"/>
</dbReference>
<dbReference type="iPTMnet" id="Q9Y376"/>
<dbReference type="PhosphoSitePlus" id="Q9Y376"/>
<dbReference type="SwissPalm" id="Q9Y376"/>
<dbReference type="BioMuta" id="CAB39"/>
<dbReference type="DMDM" id="15214082"/>
<dbReference type="jPOST" id="Q9Y376"/>
<dbReference type="MassIVE" id="Q9Y376"/>
<dbReference type="PaxDb" id="9606-ENSP00000258418"/>
<dbReference type="PeptideAtlas" id="Q9Y376"/>
<dbReference type="ProteomicsDB" id="85981"/>
<dbReference type="Pumba" id="Q9Y376"/>
<dbReference type="Antibodypedia" id="34407">
    <property type="antibodies" value="157 antibodies from 28 providers"/>
</dbReference>
<dbReference type="DNASU" id="51719"/>
<dbReference type="Ensembl" id="ENST00000258418.10">
    <property type="protein sequence ID" value="ENSP00000258418.5"/>
    <property type="gene ID" value="ENSG00000135932.12"/>
</dbReference>
<dbReference type="Ensembl" id="ENST00000409788.7">
    <property type="protein sequence ID" value="ENSP00000386238.3"/>
    <property type="gene ID" value="ENSG00000135932.12"/>
</dbReference>
<dbReference type="Ensembl" id="ENST00000410084.7">
    <property type="protein sequence ID" value="ENSP00000386642.3"/>
    <property type="gene ID" value="ENSG00000135932.12"/>
</dbReference>
<dbReference type="GeneID" id="51719"/>
<dbReference type="KEGG" id="hsa:51719"/>
<dbReference type="MANE-Select" id="ENST00000258418.10">
    <property type="protein sequence ID" value="ENSP00000258418.5"/>
    <property type="RefSeq nucleotide sequence ID" value="NM_016289.4"/>
    <property type="RefSeq protein sequence ID" value="NP_057373.1"/>
</dbReference>
<dbReference type="UCSC" id="uc002vqx.4">
    <property type="organism name" value="human"/>
</dbReference>
<dbReference type="AGR" id="HGNC:20292"/>
<dbReference type="CTD" id="51719"/>
<dbReference type="DisGeNET" id="51719"/>
<dbReference type="GeneCards" id="CAB39"/>
<dbReference type="HGNC" id="HGNC:20292">
    <property type="gene designation" value="CAB39"/>
</dbReference>
<dbReference type="HPA" id="ENSG00000135932">
    <property type="expression patterns" value="Tissue enhanced (skeletal)"/>
</dbReference>
<dbReference type="MIM" id="612174">
    <property type="type" value="gene"/>
</dbReference>
<dbReference type="neXtProt" id="NX_Q9Y376"/>
<dbReference type="OpenTargets" id="ENSG00000135932"/>
<dbReference type="PharmGKB" id="PA128394663"/>
<dbReference type="VEuPathDB" id="HostDB:ENSG00000135932"/>
<dbReference type="eggNOG" id="KOG1566">
    <property type="taxonomic scope" value="Eukaryota"/>
</dbReference>
<dbReference type="GeneTree" id="ENSGT00390000004360"/>
<dbReference type="HOGENOM" id="CLU_035755_0_0_1"/>
<dbReference type="InParanoid" id="Q9Y376"/>
<dbReference type="OMA" id="AYDHKES"/>
<dbReference type="OrthoDB" id="609103at2759"/>
<dbReference type="PAN-GO" id="Q9Y376">
    <property type="GO annotations" value="2 GO annotations based on evolutionary models"/>
</dbReference>
<dbReference type="PhylomeDB" id="Q9Y376"/>
<dbReference type="TreeFam" id="TF314910"/>
<dbReference type="PathwayCommons" id="Q9Y376"/>
<dbReference type="Reactome" id="R-HSA-380972">
    <property type="pathway name" value="Energy dependent regulation of mTOR by LKB1-AMPK"/>
</dbReference>
<dbReference type="Reactome" id="R-HSA-6798695">
    <property type="pathway name" value="Neutrophil degranulation"/>
</dbReference>
<dbReference type="SignaLink" id="Q9Y376"/>
<dbReference type="BioGRID-ORCS" id="51719">
    <property type="hits" value="224 hits in 1182 CRISPR screens"/>
</dbReference>
<dbReference type="ChiTaRS" id="CAB39">
    <property type="organism name" value="human"/>
</dbReference>
<dbReference type="EvolutionaryTrace" id="Q9Y376"/>
<dbReference type="GeneWiki" id="CAB39"/>
<dbReference type="GenomeRNAi" id="51719"/>
<dbReference type="Pharos" id="Q9Y376">
    <property type="development level" value="Tbio"/>
</dbReference>
<dbReference type="PRO" id="PR:Q9Y376"/>
<dbReference type="Proteomes" id="UP000005640">
    <property type="component" value="Chromosome 2"/>
</dbReference>
<dbReference type="RNAct" id="Q9Y376">
    <property type="molecule type" value="protein"/>
</dbReference>
<dbReference type="Bgee" id="ENSG00000135932">
    <property type="expression patterns" value="Expressed in amniotic fluid and 209 other cell types or tissues"/>
</dbReference>
<dbReference type="ExpressionAtlas" id="Q9Y376">
    <property type="expression patterns" value="baseline and differential"/>
</dbReference>
<dbReference type="GO" id="GO:0005737">
    <property type="term" value="C:cytoplasm"/>
    <property type="evidence" value="ECO:0000314"/>
    <property type="project" value="ComplexPortal"/>
</dbReference>
<dbReference type="GO" id="GO:0005829">
    <property type="term" value="C:cytosol"/>
    <property type="evidence" value="ECO:0000304"/>
    <property type="project" value="Reactome"/>
</dbReference>
<dbReference type="GO" id="GO:0070062">
    <property type="term" value="C:extracellular exosome"/>
    <property type="evidence" value="ECO:0007005"/>
    <property type="project" value="UniProtKB"/>
</dbReference>
<dbReference type="GO" id="GO:0005576">
    <property type="term" value="C:extracellular region"/>
    <property type="evidence" value="ECO:0000304"/>
    <property type="project" value="Reactome"/>
</dbReference>
<dbReference type="GO" id="GO:1904813">
    <property type="term" value="C:ficolin-1-rich granule lumen"/>
    <property type="evidence" value="ECO:0000304"/>
    <property type="project" value="Reactome"/>
</dbReference>
<dbReference type="GO" id="GO:0034774">
    <property type="term" value="C:secretory granule lumen"/>
    <property type="evidence" value="ECO:0000304"/>
    <property type="project" value="Reactome"/>
</dbReference>
<dbReference type="GO" id="GO:1902554">
    <property type="term" value="C:serine/threonine protein kinase complex"/>
    <property type="evidence" value="ECO:0000314"/>
    <property type="project" value="ParkinsonsUK-UCL"/>
</dbReference>
<dbReference type="GO" id="GO:0030018">
    <property type="term" value="C:Z disc"/>
    <property type="evidence" value="ECO:0007669"/>
    <property type="project" value="Ensembl"/>
</dbReference>
<dbReference type="GO" id="GO:0019900">
    <property type="term" value="F:kinase binding"/>
    <property type="evidence" value="ECO:0000353"/>
    <property type="project" value="BHF-UCL"/>
</dbReference>
<dbReference type="GO" id="GO:0030295">
    <property type="term" value="F:protein kinase activator activity"/>
    <property type="evidence" value="ECO:0000314"/>
    <property type="project" value="UniProtKB"/>
</dbReference>
<dbReference type="GO" id="GO:0043539">
    <property type="term" value="F:protein serine/threonine kinase activator activity"/>
    <property type="evidence" value="ECO:0000314"/>
    <property type="project" value="ParkinsonsUK-UCL"/>
</dbReference>
<dbReference type="GO" id="GO:0120283">
    <property type="term" value="F:protein serine/threonine kinase binding"/>
    <property type="evidence" value="ECO:0000353"/>
    <property type="project" value="ParkinsonsUK-UCL"/>
</dbReference>
<dbReference type="GO" id="GO:0071476">
    <property type="term" value="P:cellular hypotonic response"/>
    <property type="evidence" value="ECO:0000314"/>
    <property type="project" value="ParkinsonsUK-UCL"/>
</dbReference>
<dbReference type="GO" id="GO:0035556">
    <property type="term" value="P:intracellular signal transduction"/>
    <property type="evidence" value="ECO:0000314"/>
    <property type="project" value="ParkinsonsUK-UCL"/>
</dbReference>
<dbReference type="GO" id="GO:1901380">
    <property type="term" value="P:negative regulation of potassium ion transmembrane transport"/>
    <property type="evidence" value="ECO:0000314"/>
    <property type="project" value="ParkinsonsUK-UCL"/>
</dbReference>
<dbReference type="GO" id="GO:0071902">
    <property type="term" value="P:positive regulation of protein serine/threonine kinase activity"/>
    <property type="evidence" value="ECO:0000314"/>
    <property type="project" value="ParkinsonsUK-UCL"/>
</dbReference>
<dbReference type="GO" id="GO:0014823">
    <property type="term" value="P:response to activity"/>
    <property type="evidence" value="ECO:0007669"/>
    <property type="project" value="Ensembl"/>
</dbReference>
<dbReference type="GO" id="GO:0097066">
    <property type="term" value="P:response to thyroid hormone"/>
    <property type="evidence" value="ECO:0007669"/>
    <property type="project" value="Ensembl"/>
</dbReference>
<dbReference type="GO" id="GO:0007165">
    <property type="term" value="P:signal transduction"/>
    <property type="evidence" value="ECO:0000314"/>
    <property type="project" value="ParkinsonsUK-UCL"/>
</dbReference>
<dbReference type="FunFam" id="1.25.10.10:FF:000025">
    <property type="entry name" value="Calcium-binding protein 39"/>
    <property type="match status" value="1"/>
</dbReference>
<dbReference type="Gene3D" id="1.25.10.10">
    <property type="entry name" value="Leucine-rich Repeat Variant"/>
    <property type="match status" value="1"/>
</dbReference>
<dbReference type="InterPro" id="IPR011989">
    <property type="entry name" value="ARM-like"/>
</dbReference>
<dbReference type="InterPro" id="IPR016024">
    <property type="entry name" value="ARM-type_fold"/>
</dbReference>
<dbReference type="InterPro" id="IPR013878">
    <property type="entry name" value="Mo25"/>
</dbReference>
<dbReference type="PANTHER" id="PTHR10182:SF11">
    <property type="entry name" value="CALCIUM-BINDING PROTEIN 39"/>
    <property type="match status" value="1"/>
</dbReference>
<dbReference type="PANTHER" id="PTHR10182">
    <property type="entry name" value="CALCIUM-BINDING PROTEIN 39-RELATED"/>
    <property type="match status" value="1"/>
</dbReference>
<dbReference type="Pfam" id="PF08569">
    <property type="entry name" value="Mo25"/>
    <property type="match status" value="1"/>
</dbReference>
<dbReference type="SUPFAM" id="SSF48371">
    <property type="entry name" value="ARM repeat"/>
    <property type="match status" value="1"/>
</dbReference>
<gene>
    <name type="primary">CAB39</name>
    <name type="synonym">MO25</name>
    <name type="ORF">CGI-66</name>
</gene>
<proteinExistence type="evidence at protein level"/>
<feature type="chain" id="PRO_0000209824" description="Calcium-binding protein 39">
    <location>
        <begin position="1"/>
        <end position="341"/>
    </location>
</feature>
<feature type="mutagenesis site" description="Abolishes activation of STK11/LKB1; when associated with A-243." evidence="1">
    <original>R</original>
    <variation>A</variation>
    <location>
        <position position="240"/>
    </location>
</feature>
<feature type="mutagenesis site" description="Abolishes activation of STK11/LKB1; when associated with A-240." evidence="1">
    <original>F</original>
    <variation>A</variation>
    <location>
        <position position="243"/>
    </location>
</feature>
<feature type="helix" evidence="3">
    <location>
        <begin position="12"/>
        <end position="27"/>
    </location>
</feature>
<feature type="strand" evidence="4">
    <location>
        <begin position="29"/>
        <end position="31"/>
    </location>
</feature>
<feature type="helix" evidence="3">
    <location>
        <begin position="34"/>
        <end position="54"/>
    </location>
</feature>
<feature type="strand" evidence="5">
    <location>
        <begin position="58"/>
        <end position="61"/>
    </location>
</feature>
<feature type="helix" evidence="3">
    <location>
        <begin position="64"/>
        <end position="77"/>
    </location>
</feature>
<feature type="helix" evidence="3">
    <location>
        <begin position="79"/>
        <end position="85"/>
    </location>
</feature>
<feature type="helix" evidence="3">
    <location>
        <begin position="87"/>
        <end position="89"/>
    </location>
</feature>
<feature type="helix" evidence="3">
    <location>
        <begin position="92"/>
        <end position="106"/>
    </location>
</feature>
<feature type="helix" evidence="3">
    <location>
        <begin position="115"/>
        <end position="121"/>
    </location>
</feature>
<feature type="helix" evidence="3">
    <location>
        <begin position="125"/>
        <end position="132"/>
    </location>
</feature>
<feature type="helix" evidence="3">
    <location>
        <begin position="133"/>
        <end position="135"/>
    </location>
</feature>
<feature type="turn" evidence="3">
    <location>
        <begin position="137"/>
        <end position="139"/>
    </location>
</feature>
<feature type="helix" evidence="3">
    <location>
        <begin position="140"/>
        <end position="151"/>
    </location>
</feature>
<feature type="helix" evidence="3">
    <location>
        <begin position="154"/>
        <end position="162"/>
    </location>
</feature>
<feature type="helix" evidence="3">
    <location>
        <begin position="164"/>
        <end position="167"/>
    </location>
</feature>
<feature type="helix" evidence="3">
    <location>
        <begin position="168"/>
        <end position="172"/>
    </location>
</feature>
<feature type="helix" evidence="3">
    <location>
        <begin position="178"/>
        <end position="193"/>
    </location>
</feature>
<feature type="helix" evidence="3">
    <location>
        <begin position="196"/>
        <end position="205"/>
    </location>
</feature>
<feature type="helix" evidence="3">
    <location>
        <begin position="207"/>
        <end position="217"/>
    </location>
</feature>
<feature type="helix" evidence="3">
    <location>
        <begin position="223"/>
        <end position="238"/>
    </location>
</feature>
<feature type="helix" evidence="3">
    <location>
        <begin position="240"/>
        <end position="242"/>
    </location>
</feature>
<feature type="helix" evidence="3">
    <location>
        <begin position="243"/>
        <end position="249"/>
    </location>
</feature>
<feature type="helix" evidence="3">
    <location>
        <begin position="253"/>
        <end position="262"/>
    </location>
</feature>
<feature type="helix" evidence="3">
    <location>
        <begin position="268"/>
        <end position="283"/>
    </location>
</feature>
<feature type="helix" evidence="3">
    <location>
        <begin position="289"/>
        <end position="297"/>
    </location>
</feature>
<feature type="helix" evidence="3">
    <location>
        <begin position="299"/>
        <end position="308"/>
    </location>
</feature>
<feature type="turn" evidence="3">
    <location>
        <begin position="309"/>
        <end position="312"/>
    </location>
</feature>
<feature type="helix" evidence="5">
    <location>
        <begin position="314"/>
        <end position="316"/>
    </location>
</feature>
<feature type="helix" evidence="3">
    <location>
        <begin position="318"/>
        <end position="331"/>
    </location>
</feature>
<organism>
    <name type="scientific">Homo sapiens</name>
    <name type="common">Human</name>
    <dbReference type="NCBI Taxonomy" id="9606"/>
    <lineage>
        <taxon>Eukaryota</taxon>
        <taxon>Metazoa</taxon>
        <taxon>Chordata</taxon>
        <taxon>Craniata</taxon>
        <taxon>Vertebrata</taxon>
        <taxon>Euteleostomi</taxon>
        <taxon>Mammalia</taxon>
        <taxon>Eutheria</taxon>
        <taxon>Euarchontoglires</taxon>
        <taxon>Primates</taxon>
        <taxon>Haplorrhini</taxon>
        <taxon>Catarrhini</taxon>
        <taxon>Hominidae</taxon>
        <taxon>Homo</taxon>
    </lineage>
</organism>
<reference key="1">
    <citation type="journal article" date="2000" name="Genome Res.">
        <title>Identification of novel human genes evolutionarily conserved in Caenorhabditis elegans by comparative proteomics.</title>
        <authorList>
            <person name="Lai C.-H."/>
            <person name="Chou C.-Y."/>
            <person name="Ch'ang L.-Y."/>
            <person name="Liu C.-S."/>
            <person name="Lin W.-C."/>
        </authorList>
    </citation>
    <scope>NUCLEOTIDE SEQUENCE [LARGE SCALE MRNA]</scope>
</reference>
<reference key="2">
    <citation type="submission" date="1998-12" db="EMBL/GenBank/DDBJ databases">
        <title>A novel gene expressed in the human hypothalamus.</title>
        <authorList>
            <person name="Jin W."/>
            <person name="Shi J."/>
            <person name="Ren S."/>
            <person name="Gu J."/>
            <person name="Fu S."/>
            <person name="Huang Q."/>
            <person name="Dong H."/>
            <person name="Yu Y."/>
            <person name="Fu G."/>
            <person name="Wang Y."/>
            <person name="Chen Z."/>
            <person name="Han Z."/>
        </authorList>
    </citation>
    <scope>NUCLEOTIDE SEQUENCE [MRNA]</scope>
    <source>
        <tissue>Hypothalamus</tissue>
    </source>
</reference>
<reference key="3">
    <citation type="journal article" date="2004" name="Nat. Genet.">
        <title>Complete sequencing and characterization of 21,243 full-length human cDNAs.</title>
        <authorList>
            <person name="Ota T."/>
            <person name="Suzuki Y."/>
            <person name="Nishikawa T."/>
            <person name="Otsuki T."/>
            <person name="Sugiyama T."/>
            <person name="Irie R."/>
            <person name="Wakamatsu A."/>
            <person name="Hayashi K."/>
            <person name="Sato H."/>
            <person name="Nagai K."/>
            <person name="Kimura K."/>
            <person name="Makita H."/>
            <person name="Sekine M."/>
            <person name="Obayashi M."/>
            <person name="Nishi T."/>
            <person name="Shibahara T."/>
            <person name="Tanaka T."/>
            <person name="Ishii S."/>
            <person name="Yamamoto J."/>
            <person name="Saito K."/>
            <person name="Kawai Y."/>
            <person name="Isono Y."/>
            <person name="Nakamura Y."/>
            <person name="Nagahari K."/>
            <person name="Murakami K."/>
            <person name="Yasuda T."/>
            <person name="Iwayanagi T."/>
            <person name="Wagatsuma M."/>
            <person name="Shiratori A."/>
            <person name="Sudo H."/>
            <person name="Hosoiri T."/>
            <person name="Kaku Y."/>
            <person name="Kodaira H."/>
            <person name="Kondo H."/>
            <person name="Sugawara M."/>
            <person name="Takahashi M."/>
            <person name="Kanda K."/>
            <person name="Yokoi T."/>
            <person name="Furuya T."/>
            <person name="Kikkawa E."/>
            <person name="Omura Y."/>
            <person name="Abe K."/>
            <person name="Kamihara K."/>
            <person name="Katsuta N."/>
            <person name="Sato K."/>
            <person name="Tanikawa M."/>
            <person name="Yamazaki M."/>
            <person name="Ninomiya K."/>
            <person name="Ishibashi T."/>
            <person name="Yamashita H."/>
            <person name="Murakawa K."/>
            <person name="Fujimori K."/>
            <person name="Tanai H."/>
            <person name="Kimata M."/>
            <person name="Watanabe M."/>
            <person name="Hiraoka S."/>
            <person name="Chiba Y."/>
            <person name="Ishida S."/>
            <person name="Ono Y."/>
            <person name="Takiguchi S."/>
            <person name="Watanabe S."/>
            <person name="Yosida M."/>
            <person name="Hotuta T."/>
            <person name="Kusano J."/>
            <person name="Kanehori K."/>
            <person name="Takahashi-Fujii A."/>
            <person name="Hara H."/>
            <person name="Tanase T.-O."/>
            <person name="Nomura Y."/>
            <person name="Togiya S."/>
            <person name="Komai F."/>
            <person name="Hara R."/>
            <person name="Takeuchi K."/>
            <person name="Arita M."/>
            <person name="Imose N."/>
            <person name="Musashino K."/>
            <person name="Yuuki H."/>
            <person name="Oshima A."/>
            <person name="Sasaki N."/>
            <person name="Aotsuka S."/>
            <person name="Yoshikawa Y."/>
            <person name="Matsunawa H."/>
            <person name="Ichihara T."/>
            <person name="Shiohata N."/>
            <person name="Sano S."/>
            <person name="Moriya S."/>
            <person name="Momiyama H."/>
            <person name="Satoh N."/>
            <person name="Takami S."/>
            <person name="Terashima Y."/>
            <person name="Suzuki O."/>
            <person name="Nakagawa S."/>
            <person name="Senoh A."/>
            <person name="Mizoguchi H."/>
            <person name="Goto Y."/>
            <person name="Shimizu F."/>
            <person name="Wakebe H."/>
            <person name="Hishigaki H."/>
            <person name="Watanabe T."/>
            <person name="Sugiyama A."/>
            <person name="Takemoto M."/>
            <person name="Kawakami B."/>
            <person name="Yamazaki M."/>
            <person name="Watanabe K."/>
            <person name="Kumagai A."/>
            <person name="Itakura S."/>
            <person name="Fukuzumi Y."/>
            <person name="Fujimori Y."/>
            <person name="Komiyama M."/>
            <person name="Tashiro H."/>
            <person name="Tanigami A."/>
            <person name="Fujiwara T."/>
            <person name="Ono T."/>
            <person name="Yamada K."/>
            <person name="Fujii Y."/>
            <person name="Ozaki K."/>
            <person name="Hirao M."/>
            <person name="Ohmori Y."/>
            <person name="Kawabata A."/>
            <person name="Hikiji T."/>
            <person name="Kobatake N."/>
            <person name="Inagaki H."/>
            <person name="Ikema Y."/>
            <person name="Okamoto S."/>
            <person name="Okitani R."/>
            <person name="Kawakami T."/>
            <person name="Noguchi S."/>
            <person name="Itoh T."/>
            <person name="Shigeta K."/>
            <person name="Senba T."/>
            <person name="Matsumura K."/>
            <person name="Nakajima Y."/>
            <person name="Mizuno T."/>
            <person name="Morinaga M."/>
            <person name="Sasaki M."/>
            <person name="Togashi T."/>
            <person name="Oyama M."/>
            <person name="Hata H."/>
            <person name="Watanabe M."/>
            <person name="Komatsu T."/>
            <person name="Mizushima-Sugano J."/>
            <person name="Satoh T."/>
            <person name="Shirai Y."/>
            <person name="Takahashi Y."/>
            <person name="Nakagawa K."/>
            <person name="Okumura K."/>
            <person name="Nagase T."/>
            <person name="Nomura N."/>
            <person name="Kikuchi H."/>
            <person name="Masuho Y."/>
            <person name="Yamashita R."/>
            <person name="Nakai K."/>
            <person name="Yada T."/>
            <person name="Nakamura Y."/>
            <person name="Ohara O."/>
            <person name="Isogai T."/>
            <person name="Sugano S."/>
        </authorList>
    </citation>
    <scope>NUCLEOTIDE SEQUENCE [LARGE SCALE MRNA]</scope>
    <source>
        <tissue>Testis</tissue>
    </source>
</reference>
<reference key="4">
    <citation type="submission" date="2005-07" db="EMBL/GenBank/DDBJ databases">
        <authorList>
            <person name="Mural R.J."/>
            <person name="Istrail S."/>
            <person name="Sutton G."/>
            <person name="Florea L."/>
            <person name="Halpern A.L."/>
            <person name="Mobarry C.M."/>
            <person name="Lippert R."/>
            <person name="Walenz B."/>
            <person name="Shatkay H."/>
            <person name="Dew I."/>
            <person name="Miller J.R."/>
            <person name="Flanigan M.J."/>
            <person name="Edwards N.J."/>
            <person name="Bolanos R."/>
            <person name="Fasulo D."/>
            <person name="Halldorsson B.V."/>
            <person name="Hannenhalli S."/>
            <person name="Turner R."/>
            <person name="Yooseph S."/>
            <person name="Lu F."/>
            <person name="Nusskern D.R."/>
            <person name="Shue B.C."/>
            <person name="Zheng X.H."/>
            <person name="Zhong F."/>
            <person name="Delcher A.L."/>
            <person name="Huson D.H."/>
            <person name="Kravitz S.A."/>
            <person name="Mouchard L."/>
            <person name="Reinert K."/>
            <person name="Remington K.A."/>
            <person name="Clark A.G."/>
            <person name="Waterman M.S."/>
            <person name="Eichler E.E."/>
            <person name="Adams M.D."/>
            <person name="Hunkapiller M.W."/>
            <person name="Myers E.W."/>
            <person name="Venter J.C."/>
        </authorList>
    </citation>
    <scope>NUCLEOTIDE SEQUENCE [LARGE SCALE GENOMIC DNA]</scope>
</reference>
<reference key="5">
    <citation type="journal article" date="2004" name="Genome Res.">
        <title>The status, quality, and expansion of the NIH full-length cDNA project: the Mammalian Gene Collection (MGC).</title>
        <authorList>
            <consortium name="The MGC Project Team"/>
        </authorList>
    </citation>
    <scope>NUCLEOTIDE SEQUENCE [LARGE SCALE MRNA]</scope>
    <source>
        <tissue>Duodenum</tissue>
    </source>
</reference>
<reference key="6">
    <citation type="journal article" date="2011" name="BMC Syst. Biol.">
        <title>Initial characterization of the human central proteome.</title>
        <authorList>
            <person name="Burkard T.R."/>
            <person name="Planyavsky M."/>
            <person name="Kaupe I."/>
            <person name="Breitwieser F.P."/>
            <person name="Buerckstuemmer T."/>
            <person name="Bennett K.L."/>
            <person name="Superti-Furga G."/>
            <person name="Colinge J."/>
        </authorList>
    </citation>
    <scope>IDENTIFICATION BY MASS SPECTROMETRY [LARGE SCALE ANALYSIS]</scope>
</reference>
<reference key="7">
    <citation type="journal article" date="2014" name="J. Proteomics">
        <title>An enzyme assisted RP-RPLC approach for in-depth analysis of human liver phosphoproteome.</title>
        <authorList>
            <person name="Bian Y."/>
            <person name="Song C."/>
            <person name="Cheng K."/>
            <person name="Dong M."/>
            <person name="Wang F."/>
            <person name="Huang J."/>
            <person name="Sun D."/>
            <person name="Wang L."/>
            <person name="Ye M."/>
            <person name="Zou H."/>
        </authorList>
    </citation>
    <scope>IDENTIFICATION BY MASS SPECTROMETRY [LARGE SCALE ANALYSIS]</scope>
    <source>
        <tissue>Liver</tissue>
    </source>
</reference>
<reference key="8">
    <citation type="journal article" date="2004" name="Nat. Struct. Mol. Biol.">
        <title>Crystal structure of MO25 alpha in complex with the C-terminus of the pseudo kinase STE20-related adaptor.</title>
        <authorList>
            <person name="Milburn C.C."/>
            <person name="Boudeau J."/>
            <person name="Deak M."/>
            <person name="Alessi D.R."/>
            <person name="van Aalten D.M."/>
        </authorList>
    </citation>
    <scope>X-RAY CRYSTALLOGRAPHY (1.85 ANGSTROMS) OF 10-339</scope>
</reference>
<reference key="9">
    <citation type="journal article" date="2009" name="Science">
        <title>Structure of the LKB1-STRAD-MO25 complex reveals an allosteric mechanism of kinase activation.</title>
        <authorList>
            <person name="Zeqiraj E."/>
            <person name="Filippi B.M."/>
            <person name="Deak M."/>
            <person name="Alessi D.R."/>
            <person name="van Aalten D.M."/>
        </authorList>
    </citation>
    <scope>X-RAY CRYSTALLOGRAPHY (2.65 ANGSTROMS) OF 1-341 IN COMPLEX WITH STK11/LKB1 AND STRADA</scope>
    <scope>IDENTIFICATION IN A COMPLEX WITH STK11/LKB1 AND STRADA</scope>
    <scope>FUNCTION</scope>
    <scope>MUTAGENESIS OF ARG-240 AND PHE-243</scope>
</reference>
<sequence length="341" mass="39869">MPFPFGKSHKSPADIVKNLKESMAVLEKQDISDKKAEKATEEVSKNLVAMKEILYGTNEKEPQTEAVAQLAQELYNSGLLSTLVADLQLIDFEGKKDVAQIFNNILRRQIGTRTPTVEYICTQQNILFMLLKGYESPEIALNCGIMLRECIRHEPLAKIILWSEQFYDFFRYVEMSTFDIASDAFATFKDLLTRHKLLSAEFLEQHYDRFFSEYEKLLHSENYVTKRQSLKLLGELLLDRHNFTIMTKYISKPENLKLMMNLLRDKSRNIQFEAFHVFKVFVANPNKTQPILDILLKNQAKLIEFLSKFQNDRTEDEQFNDEKTYLVKQIRDLKRPAQQEA</sequence>
<protein>
    <recommendedName>
        <fullName>Calcium-binding protein 39</fullName>
    </recommendedName>
    <alternativeName>
        <fullName>MO25alpha</fullName>
    </alternativeName>
    <alternativeName>
        <fullName>Protein Mo25</fullName>
    </alternativeName>
</protein>
<evidence type="ECO:0000269" key="1">
    <source>
    </source>
</evidence>
<evidence type="ECO:0000305" key="2"/>
<evidence type="ECO:0007829" key="3">
    <source>
        <dbReference type="PDB" id="1UPK"/>
    </source>
</evidence>
<evidence type="ECO:0007829" key="4">
    <source>
        <dbReference type="PDB" id="3GNI"/>
    </source>
</evidence>
<evidence type="ECO:0007829" key="5">
    <source>
        <dbReference type="PDB" id="4FZD"/>
    </source>
</evidence>
<keyword id="KW-0002">3D-structure</keyword>
<keyword id="KW-0963">Cytoplasm</keyword>
<keyword id="KW-1267">Proteomics identification</keyword>
<keyword id="KW-1185">Reference proteome</keyword>
<comment type="function">
    <text evidence="1">Component of a complex that binds and activates STK11/LKB1. In the complex, required to stabilize the interaction between CAB39/MO25 (CAB39/MO25alpha or CAB39L/MO25beta) and STK11/LKB1.</text>
</comment>
<comment type="subunit">
    <text evidence="1">Component of a trimeric complex composed of STK11/LKB1, STRAD (STRADA or STRADB) and CAB39/MO25 (CAB39/MO25alpha or CAB39L/MO25beta): the complex tethers STK11/LKB1 in the cytoplasm and stimulates its catalytic activity.</text>
</comment>
<comment type="interaction">
    <interactant intactId="EBI-306905">
        <id>Q9Y376</id>
    </interactant>
    <interactant intactId="EBI-744115">
        <id>Q9C0F1</id>
        <label>CEP44</label>
    </interactant>
    <organismsDiffer>false</organismsDiffer>
    <experiments>3</experiments>
</comment>
<comment type="interaction">
    <interactant intactId="EBI-306905">
        <id>Q9Y376</id>
    </interactant>
    <interactant intactId="EBI-618309">
        <id>Q08379</id>
        <label>GOLGA2</label>
    </interactant>
    <organismsDiffer>false</organismsDiffer>
    <experiments>3</experiments>
</comment>
<comment type="interaction">
    <interactant intactId="EBI-306905">
        <id>Q9Y376</id>
    </interactant>
    <interactant intactId="EBI-11987923">
        <id>P59942</id>
        <label>MCCD1</label>
    </interactant>
    <organismsDiffer>false</organismsDiffer>
    <experiments>3</experiments>
</comment>
<comment type="interaction">
    <interactant intactId="EBI-306905">
        <id>Q9Y376</id>
    </interactant>
    <interactant intactId="EBI-394632">
        <id>O43513</id>
        <label>MED7</label>
    </interactant>
    <organismsDiffer>false</organismsDiffer>
    <experiments>3</experiments>
</comment>
<comment type="interaction">
    <interactant intactId="EBI-306905">
        <id>Q9Y376</id>
    </interactant>
    <interactant intactId="EBI-620853">
        <id>O95747</id>
        <label>OXSR1</label>
    </interactant>
    <organismsDiffer>false</organismsDiffer>
    <experiments>3</experiments>
</comment>
<comment type="interaction">
    <interactant intactId="EBI-306905">
        <id>Q9Y376</id>
    </interactant>
    <interactant intactId="EBI-352908">
        <id>P34897</id>
        <label>SHMT2</label>
    </interactant>
    <organismsDiffer>false</organismsDiffer>
    <experiments>3</experiments>
</comment>
<comment type="interaction">
    <interactant intactId="EBI-306905">
        <id>Q9Y376</id>
    </interactant>
    <interactant intactId="EBI-306838">
        <id>Q15831</id>
        <label>STK11</label>
    </interactant>
    <organismsDiffer>false</organismsDiffer>
    <experiments>20</experiments>
</comment>
<comment type="interaction">
    <interactant intactId="EBI-306905">
        <id>Q9Y376</id>
    </interactant>
    <interactant intactId="EBI-10299018">
        <id>Q9Y6E0-2</id>
        <label>STK24</label>
    </interactant>
    <organismsDiffer>false</organismsDiffer>
    <experiments>3</experiments>
</comment>
<comment type="interaction">
    <interactant intactId="EBI-306905">
        <id>Q9Y376</id>
    </interactant>
    <interactant intactId="EBI-618295">
        <id>O00506</id>
        <label>STK25</label>
    </interactant>
    <organismsDiffer>false</organismsDiffer>
    <experiments>5</experiments>
</comment>
<comment type="interaction">
    <interactant intactId="EBI-306905">
        <id>Q9Y376</id>
    </interactant>
    <interactant intactId="EBI-618239">
        <id>Q9P289</id>
        <label>STK26</label>
    </interactant>
    <organismsDiffer>false</organismsDiffer>
    <experiments>6</experiments>
</comment>
<comment type="interaction">
    <interactant intactId="EBI-306905">
        <id>Q9Y376</id>
    </interactant>
    <interactant intactId="EBI-15996971">
        <id>Q9P289-1</id>
        <label>STK26</label>
    </interactant>
    <organismsDiffer>false</organismsDiffer>
    <experiments>10</experiments>
</comment>
<comment type="interaction">
    <interactant intactId="EBI-306905">
        <id>Q9Y376</id>
    </interactant>
    <interactant intactId="EBI-2680974">
        <id>Q9UEW8</id>
        <label>STK39</label>
    </interactant>
    <organismsDiffer>false</organismsDiffer>
    <experiments>4</experiments>
</comment>
<comment type="interaction">
    <interactant intactId="EBI-306905">
        <id>Q9Y376</id>
    </interactant>
    <interactant intactId="EBI-1109114">
        <id>Q7RTN6</id>
        <label>STRADA</label>
    </interactant>
    <organismsDiffer>false</organismsDiffer>
    <experiments>4</experiments>
</comment>
<comment type="interaction">
    <interactant intactId="EBI-306905">
        <id>Q9Y376</id>
    </interactant>
    <interactant intactId="EBI-15787241">
        <id>Q7RTN6-1</id>
        <label>STRADA</label>
    </interactant>
    <organismsDiffer>false</organismsDiffer>
    <experiments>8</experiments>
</comment>
<comment type="interaction">
    <interactant intactId="EBI-306905">
        <id>Q9Y376</id>
    </interactant>
    <interactant intactId="EBI-306893">
        <id>Q9C0K7</id>
        <label>STRADB</label>
    </interactant>
    <organismsDiffer>false</organismsDiffer>
    <experiments>8</experiments>
</comment>
<comment type="subcellular location">
    <subcellularLocation>
        <location evidence="2">Cytoplasm</location>
    </subcellularLocation>
</comment>
<comment type="similarity">
    <text evidence="2">Belongs to the Mo25 family.</text>
</comment>